<accession>Q6NUD0</accession>
<sequence length="333" mass="36052">MSKGSAWGRPVTAPACMEVQIGAVRYRRDGALLLAASSLSSRTWGGSIWVFKDPEGAPNESLCTAGVQTEAGVTDVAWVSEKGILVASDSGAVELWEILEKESLLVNKFAKYEHDDIVKTLSVFSDGTQAVSGGKDFSVKVWDLSQKAVLKSYNAHSSEVNCVAACPGKDTIFLSCGEDGRILLWDTRKPKPATRIDFCASDTIPTSVTWHPEKDDTFACGDETGNVSLVNIKNPDSAQTSAVHSQNITGLAYSYHSSPFLASISEDCTVAVLDADFSEVFRDLSHRDFVTGVAWSPLDHSKFTTVGWDHKVLHHHLPSEGRTENLIATKAED</sequence>
<comment type="function">
    <text evidence="2 3">Non-catalytic component of the 20S prmt5-containing methyltransferase complex, which modifies specific arginines to dimethylarginines in several spliceosomal Sm proteins and histones. Required for normal prmt5 methyltransferase activity.</text>
</comment>
<comment type="subunit">
    <text evidence="2 3">Heterotetramer; dimer of heterodimer with prmt5. Interacts with histone h2a and h4 and with nucleoplasmin.</text>
</comment>
<comment type="interaction">
    <interactant intactId="EBI-21229433">
        <id>Q6NUD0</id>
    </interactant>
    <interactant intactId="EBI-21229405">
        <id>Q6NUA1</id>
        <label>prmt5</label>
    </interactant>
    <organismsDiffer>false</organismsDiffer>
    <experiments>5</experiments>
</comment>
<comment type="subcellular location">
    <subcellularLocation>
        <location evidence="2">Cytoplasm</location>
    </subcellularLocation>
    <subcellularLocation>
        <location evidence="2">Nucleus</location>
    </subcellularLocation>
    <text>Enriched on chromatin.</text>
</comment>
<comment type="tissue specificity">
    <text evidence="2">Detected in egg (at protein level).</text>
</comment>
<feature type="chain" id="PRO_0000422973" description="Methylosome protein WDR77">
    <location>
        <begin position="1"/>
        <end position="333"/>
    </location>
</feature>
<feature type="repeat" description="WD 1">
    <location>
        <begin position="16"/>
        <end position="59"/>
    </location>
</feature>
<feature type="repeat" description="WD 2">
    <location>
        <begin position="68"/>
        <end position="106"/>
    </location>
</feature>
<feature type="repeat" description="WD 3">
    <location>
        <begin position="113"/>
        <end position="152"/>
    </location>
</feature>
<feature type="repeat" description="WD 4">
    <location>
        <begin position="155"/>
        <end position="195"/>
    </location>
</feature>
<feature type="repeat" description="WD 5">
    <location>
        <begin position="199"/>
        <end position="240"/>
    </location>
</feature>
<feature type="repeat" description="WD 6">
    <location>
        <begin position="243"/>
        <end position="283"/>
    </location>
</feature>
<feature type="repeat" description="WD 7">
    <location>
        <begin position="285"/>
        <end position="328"/>
    </location>
</feature>
<feature type="strand" evidence="5">
    <location>
        <begin position="19"/>
        <end position="26"/>
    </location>
</feature>
<feature type="strand" evidence="5">
    <location>
        <begin position="28"/>
        <end position="30"/>
    </location>
</feature>
<feature type="strand" evidence="5">
    <location>
        <begin position="32"/>
        <end position="37"/>
    </location>
</feature>
<feature type="strand" evidence="5">
    <location>
        <begin position="39"/>
        <end position="43"/>
    </location>
</feature>
<feature type="strand" evidence="5">
    <location>
        <begin position="46"/>
        <end position="53"/>
    </location>
</feature>
<feature type="helix" evidence="5">
    <location>
        <begin position="60"/>
        <end position="62"/>
    </location>
</feature>
<feature type="strand" evidence="5">
    <location>
        <begin position="64"/>
        <end position="68"/>
    </location>
</feature>
<feature type="strand" evidence="5">
    <location>
        <begin position="73"/>
        <end position="79"/>
    </location>
</feature>
<feature type="turn" evidence="5">
    <location>
        <begin position="80"/>
        <end position="82"/>
    </location>
</feature>
<feature type="strand" evidence="5">
    <location>
        <begin position="83"/>
        <end position="88"/>
    </location>
</feature>
<feature type="strand" evidence="5">
    <location>
        <begin position="93"/>
        <end position="95"/>
    </location>
</feature>
<feature type="strand" evidence="5">
    <location>
        <begin position="97"/>
        <end position="99"/>
    </location>
</feature>
<feature type="turn" evidence="5">
    <location>
        <begin position="100"/>
        <end position="103"/>
    </location>
</feature>
<feature type="strand" evidence="5">
    <location>
        <begin position="109"/>
        <end position="111"/>
    </location>
</feature>
<feature type="strand" evidence="5">
    <location>
        <begin position="118"/>
        <end position="123"/>
    </location>
</feature>
<feature type="strand" evidence="5">
    <location>
        <begin position="125"/>
        <end position="134"/>
    </location>
</feature>
<feature type="strand" evidence="5">
    <location>
        <begin position="139"/>
        <end position="143"/>
    </location>
</feature>
<feature type="turn" evidence="5">
    <location>
        <begin position="144"/>
        <end position="147"/>
    </location>
</feature>
<feature type="strand" evidence="5">
    <location>
        <begin position="148"/>
        <end position="153"/>
    </location>
</feature>
<feature type="strand" evidence="5">
    <location>
        <begin position="160"/>
        <end position="165"/>
    </location>
</feature>
<feature type="strand" evidence="5">
    <location>
        <begin position="173"/>
        <end position="177"/>
    </location>
</feature>
<feature type="strand" evidence="5">
    <location>
        <begin position="182"/>
        <end position="184"/>
    </location>
</feature>
<feature type="strand" evidence="5">
    <location>
        <begin position="189"/>
        <end position="191"/>
    </location>
</feature>
<feature type="strand" evidence="5">
    <location>
        <begin position="205"/>
        <end position="210"/>
    </location>
</feature>
<feature type="strand" evidence="5">
    <location>
        <begin position="217"/>
        <end position="225"/>
    </location>
</feature>
<feature type="strand" evidence="5">
    <location>
        <begin position="227"/>
        <end position="233"/>
    </location>
</feature>
<feature type="helix" evidence="5">
    <location>
        <begin position="235"/>
        <end position="237"/>
    </location>
</feature>
<feature type="strand" evidence="5">
    <location>
        <begin position="239"/>
        <end position="241"/>
    </location>
</feature>
<feature type="strand" evidence="5">
    <location>
        <begin position="248"/>
        <end position="253"/>
    </location>
</feature>
<feature type="strand" evidence="5">
    <location>
        <begin position="255"/>
        <end position="258"/>
    </location>
</feature>
<feature type="strand" evidence="5">
    <location>
        <begin position="261"/>
        <end position="265"/>
    </location>
</feature>
<feature type="strand" evidence="5">
    <location>
        <begin position="270"/>
        <end position="273"/>
    </location>
</feature>
<feature type="strand" evidence="5">
    <location>
        <begin position="279"/>
        <end position="283"/>
    </location>
</feature>
<feature type="strand" evidence="5">
    <location>
        <begin position="290"/>
        <end position="295"/>
    </location>
</feature>
<feature type="strand" evidence="5">
    <location>
        <begin position="297"/>
        <end position="299"/>
    </location>
</feature>
<feature type="strand" evidence="5">
    <location>
        <begin position="302"/>
        <end position="307"/>
    </location>
</feature>
<feature type="strand" evidence="5">
    <location>
        <begin position="312"/>
        <end position="316"/>
    </location>
</feature>
<name>MEP50_XENLA</name>
<organism>
    <name type="scientific">Xenopus laevis</name>
    <name type="common">African clawed frog</name>
    <dbReference type="NCBI Taxonomy" id="8355"/>
    <lineage>
        <taxon>Eukaryota</taxon>
        <taxon>Metazoa</taxon>
        <taxon>Chordata</taxon>
        <taxon>Craniata</taxon>
        <taxon>Vertebrata</taxon>
        <taxon>Euteleostomi</taxon>
        <taxon>Amphibia</taxon>
        <taxon>Batrachia</taxon>
        <taxon>Anura</taxon>
        <taxon>Pipoidea</taxon>
        <taxon>Pipidae</taxon>
        <taxon>Xenopodinae</taxon>
        <taxon>Xenopus</taxon>
        <taxon>Xenopus</taxon>
    </lineage>
</organism>
<evidence type="ECO:0000250" key="1">
    <source>
        <dbReference type="UniProtKB" id="Q9BQA1"/>
    </source>
</evidence>
<evidence type="ECO:0000269" key="2">
    <source>
    </source>
</evidence>
<evidence type="ECO:0000269" key="3">
    <source>
    </source>
</evidence>
<evidence type="ECO:0000305" key="4"/>
<evidence type="ECO:0007829" key="5">
    <source>
        <dbReference type="PDB" id="4G56"/>
    </source>
</evidence>
<gene>
    <name evidence="1" type="primary">wdr77</name>
    <name evidence="1" type="synonym">mep50</name>
</gene>
<keyword id="KW-0002">3D-structure</keyword>
<keyword id="KW-0963">Cytoplasm</keyword>
<keyword id="KW-0539">Nucleus</keyword>
<keyword id="KW-1185">Reference proteome</keyword>
<keyword id="KW-0677">Repeat</keyword>
<keyword id="KW-0853">WD repeat</keyword>
<dbReference type="EMBL" id="BC068665">
    <property type="protein sequence ID" value="AAH68665.1"/>
    <property type="molecule type" value="mRNA"/>
</dbReference>
<dbReference type="RefSeq" id="NP_001084703.1">
    <property type="nucleotide sequence ID" value="NM_001091234.1"/>
</dbReference>
<dbReference type="PDB" id="4G56">
    <property type="method" value="X-ray"/>
    <property type="resolution" value="2.95 A"/>
    <property type="chains" value="B/D=2-333"/>
</dbReference>
<dbReference type="PDBsum" id="4G56"/>
<dbReference type="SMR" id="Q6NUD0"/>
<dbReference type="BioGRID" id="101086">
    <property type="interactions" value="3"/>
</dbReference>
<dbReference type="IntAct" id="Q6NUD0">
    <property type="interactions" value="1"/>
</dbReference>
<dbReference type="DNASU" id="414664"/>
<dbReference type="GeneID" id="414664"/>
<dbReference type="KEGG" id="xla:414664"/>
<dbReference type="AGR" id="Xenbase:XB-GENE-972901"/>
<dbReference type="CTD" id="414664"/>
<dbReference type="Xenbase" id="XB-GENE-972901">
    <property type="gene designation" value="wdr77.S"/>
</dbReference>
<dbReference type="OrthoDB" id="10260946at2759"/>
<dbReference type="CD-CODE" id="78E86D56">
    <property type="entry name" value="Mitochondrial cloud"/>
</dbReference>
<dbReference type="EvolutionaryTrace" id="Q6NUD0"/>
<dbReference type="Proteomes" id="UP000186698">
    <property type="component" value="Chromosome 2S"/>
</dbReference>
<dbReference type="Bgee" id="414664">
    <property type="expression patterns" value="Expressed in oocyte and 19 other cell types or tissues"/>
</dbReference>
<dbReference type="GO" id="GO:0005829">
    <property type="term" value="C:cytosol"/>
    <property type="evidence" value="ECO:0000250"/>
    <property type="project" value="UniProtKB"/>
</dbReference>
<dbReference type="GO" id="GO:0035097">
    <property type="term" value="C:histone methyltransferase complex"/>
    <property type="evidence" value="ECO:0000314"/>
    <property type="project" value="UniProtKB"/>
</dbReference>
<dbReference type="GO" id="GO:0034709">
    <property type="term" value="C:methylosome"/>
    <property type="evidence" value="ECO:0000250"/>
    <property type="project" value="UniProtKB"/>
</dbReference>
<dbReference type="GO" id="GO:0007309">
    <property type="term" value="P:oocyte axis specification"/>
    <property type="evidence" value="ECO:0000318"/>
    <property type="project" value="GO_Central"/>
</dbReference>
<dbReference type="FunFam" id="2.130.10.10:FF:000322">
    <property type="entry name" value="Methylosome protein 50"/>
    <property type="match status" value="1"/>
</dbReference>
<dbReference type="Gene3D" id="2.130.10.10">
    <property type="entry name" value="YVTN repeat-like/Quinoprotein amine dehydrogenase"/>
    <property type="match status" value="1"/>
</dbReference>
<dbReference type="InterPro" id="IPR052139">
    <property type="entry name" value="Methylosome_Comp_WDR77"/>
</dbReference>
<dbReference type="InterPro" id="IPR015943">
    <property type="entry name" value="WD40/YVTN_repeat-like_dom_sf"/>
</dbReference>
<dbReference type="InterPro" id="IPR019775">
    <property type="entry name" value="WD40_repeat_CS"/>
</dbReference>
<dbReference type="InterPro" id="IPR036322">
    <property type="entry name" value="WD40_repeat_dom_sf"/>
</dbReference>
<dbReference type="InterPro" id="IPR001680">
    <property type="entry name" value="WD40_rpt"/>
</dbReference>
<dbReference type="PANTHER" id="PTHR46853">
    <property type="entry name" value="METHYLOSOME PROTEIN 50"/>
    <property type="match status" value="1"/>
</dbReference>
<dbReference type="PANTHER" id="PTHR46853:SF1">
    <property type="entry name" value="METHYLOSOME PROTEIN 50"/>
    <property type="match status" value="1"/>
</dbReference>
<dbReference type="Pfam" id="PF00400">
    <property type="entry name" value="WD40"/>
    <property type="match status" value="2"/>
</dbReference>
<dbReference type="SMART" id="SM00320">
    <property type="entry name" value="WD40"/>
    <property type="match status" value="6"/>
</dbReference>
<dbReference type="SUPFAM" id="SSF50978">
    <property type="entry name" value="WD40 repeat-like"/>
    <property type="match status" value="1"/>
</dbReference>
<dbReference type="PROSITE" id="PS00678">
    <property type="entry name" value="WD_REPEATS_1"/>
    <property type="match status" value="1"/>
</dbReference>
<dbReference type="PROSITE" id="PS50082">
    <property type="entry name" value="WD_REPEATS_2"/>
    <property type="match status" value="2"/>
</dbReference>
<dbReference type="PROSITE" id="PS50294">
    <property type="entry name" value="WD_REPEATS_REGION"/>
    <property type="match status" value="1"/>
</dbReference>
<protein>
    <recommendedName>
        <fullName evidence="4">Methylosome protein WDR77</fullName>
    </recommendedName>
    <alternativeName>
        <fullName evidence="1">Methylosome protein 50</fullName>
        <shortName evidence="1">MEP-50</shortName>
    </alternativeName>
    <alternativeName>
        <fullName>WD repeat-containing protein 77</fullName>
    </alternativeName>
</protein>
<proteinExistence type="evidence at protein level"/>
<reference key="1">
    <citation type="submission" date="2004-04" db="EMBL/GenBank/DDBJ databases">
        <authorList>
            <consortium name="NIH - Xenopus Gene Collection (XGC) project"/>
        </authorList>
    </citation>
    <scope>NUCLEOTIDE SEQUENCE [LARGE SCALE MRNA]</scope>
    <source>
        <tissue>Ovary</tissue>
    </source>
</reference>
<reference key="2">
    <citation type="journal article" date="2011" name="J. Biol. Chem.">
        <title>Protein arginine methyltransferase Prmt5-Mep50 methylates histones H2A and H4 and the histone chaperone nucleoplasmin in Xenopus laevis eggs.</title>
        <authorList>
            <person name="Wilczek C."/>
            <person name="Chitta R."/>
            <person name="Woo E."/>
            <person name="Shabanowitz J."/>
            <person name="Chait B.T."/>
            <person name="Hunt D.F."/>
            <person name="Shechter D."/>
        </authorList>
    </citation>
    <scope>FUNCTION</scope>
    <scope>SUBCELLULAR LOCATION</scope>
    <scope>SUBUNIT</scope>
    <scope>IDENTIFICATION BY MASS SPECTROMETRY</scope>
    <scope>TISSUE SPECIFICITY</scope>
</reference>
<reference key="3">
    <citation type="journal article" date="2013" name="PLoS ONE">
        <title>Structure of the arginine methyltransferase PRMT5-MEP50 reveals a mechanism for substrate specificity.</title>
        <authorList>
            <person name="Ho M.C."/>
            <person name="Wilczek C."/>
            <person name="Bonanno J.B."/>
            <person name="Xing L."/>
            <person name="Seznec J."/>
            <person name="Matsui T."/>
            <person name="Carter L.G."/>
            <person name="Onikubo T."/>
            <person name="Kumar P.R."/>
            <person name="Chan M.K."/>
            <person name="Brenowitz M."/>
            <person name="Cheng R.H."/>
            <person name="Reimer U."/>
            <person name="Almo S.C."/>
            <person name="Shechter D."/>
        </authorList>
    </citation>
    <scope>X-RAY CRYSTALLOGRAPHY (2.95 ANGSTROMS) IN COMPLEX WITH PRMT5</scope>
    <scope>ELECTRON MICROSCOPY</scope>
    <scope>FUNCTION</scope>
    <scope>SUBUNIT</scope>
</reference>